<accession>A6X1X7</accession>
<evidence type="ECO:0000255" key="1">
    <source>
        <dbReference type="HAMAP-Rule" id="MF_00380"/>
    </source>
</evidence>
<protein>
    <recommendedName>
        <fullName evidence="1">Integration host factor subunit alpha</fullName>
        <shortName evidence="1">IHF-alpha</shortName>
    </recommendedName>
</protein>
<keyword id="KW-0233">DNA recombination</keyword>
<keyword id="KW-0238">DNA-binding</keyword>
<keyword id="KW-1185">Reference proteome</keyword>
<keyword id="KW-0804">Transcription</keyword>
<keyword id="KW-0805">Transcription regulation</keyword>
<keyword id="KW-0810">Translation regulation</keyword>
<gene>
    <name evidence="1" type="primary">ihfA</name>
    <name evidence="1" type="synonym">himA</name>
    <name type="ordered locus">Oant_2518</name>
</gene>
<name>IHFA_BRUA4</name>
<organism>
    <name type="scientific">Brucella anthropi (strain ATCC 49188 / DSM 6882 / CCUG 24695 / JCM 21032 / LMG 3331 / NBRC 15819 / NCTC 12168 / Alc 37)</name>
    <name type="common">Ochrobactrum anthropi</name>
    <dbReference type="NCBI Taxonomy" id="439375"/>
    <lineage>
        <taxon>Bacteria</taxon>
        <taxon>Pseudomonadati</taxon>
        <taxon>Pseudomonadota</taxon>
        <taxon>Alphaproteobacteria</taxon>
        <taxon>Hyphomicrobiales</taxon>
        <taxon>Brucellaceae</taxon>
        <taxon>Brucella/Ochrobactrum group</taxon>
        <taxon>Brucella</taxon>
    </lineage>
</organism>
<reference key="1">
    <citation type="journal article" date="2011" name="J. Bacteriol.">
        <title>Genome of Ochrobactrum anthropi ATCC 49188 T, a versatile opportunistic pathogen and symbiont of several eukaryotic hosts.</title>
        <authorList>
            <person name="Chain P.S."/>
            <person name="Lang D.M."/>
            <person name="Comerci D.J."/>
            <person name="Malfatti S.A."/>
            <person name="Vergez L.M."/>
            <person name="Shin M."/>
            <person name="Ugalde R.A."/>
            <person name="Garcia E."/>
            <person name="Tolmasky M.E."/>
        </authorList>
    </citation>
    <scope>NUCLEOTIDE SEQUENCE [LARGE SCALE GENOMIC DNA]</scope>
    <source>
        <strain>ATCC 49188 / DSM 6882 / CCUG 24695 / JCM 21032 / LMG 3331 / NBRC 15819 / NCTC 12168 / Alc 37</strain>
    </source>
</reference>
<sequence length="107" mass="12044">MGGKTVTRADLAEAVYRKVGLSRTESAALVEMILDEVCDAIVNGETVKLSSFATFQVRDKNERIGRNPKTGEEVPILPRRVMTFKASNVLKQRILQEHQKRETKSQK</sequence>
<dbReference type="EMBL" id="CP000758">
    <property type="protein sequence ID" value="ABS15231.1"/>
    <property type="molecule type" value="Genomic_DNA"/>
</dbReference>
<dbReference type="RefSeq" id="WP_010661102.1">
    <property type="nucleotide sequence ID" value="NC_009667.1"/>
</dbReference>
<dbReference type="SMR" id="A6X1X7"/>
<dbReference type="STRING" id="439375.Oant_2518"/>
<dbReference type="KEGG" id="oan:Oant_2518"/>
<dbReference type="eggNOG" id="COG0776">
    <property type="taxonomic scope" value="Bacteria"/>
</dbReference>
<dbReference type="HOGENOM" id="CLU_105066_1_1_5"/>
<dbReference type="Proteomes" id="UP000002301">
    <property type="component" value="Chromosome 1"/>
</dbReference>
<dbReference type="GO" id="GO:0005829">
    <property type="term" value="C:cytosol"/>
    <property type="evidence" value="ECO:0007669"/>
    <property type="project" value="TreeGrafter"/>
</dbReference>
<dbReference type="GO" id="GO:0003677">
    <property type="term" value="F:DNA binding"/>
    <property type="evidence" value="ECO:0007669"/>
    <property type="project" value="UniProtKB-UniRule"/>
</dbReference>
<dbReference type="GO" id="GO:0030527">
    <property type="term" value="F:structural constituent of chromatin"/>
    <property type="evidence" value="ECO:0007669"/>
    <property type="project" value="InterPro"/>
</dbReference>
<dbReference type="GO" id="GO:0006310">
    <property type="term" value="P:DNA recombination"/>
    <property type="evidence" value="ECO:0007669"/>
    <property type="project" value="UniProtKB-UniRule"/>
</dbReference>
<dbReference type="GO" id="GO:0009893">
    <property type="term" value="P:positive regulation of metabolic process"/>
    <property type="evidence" value="ECO:0007669"/>
    <property type="project" value="UniProtKB-ARBA"/>
</dbReference>
<dbReference type="GO" id="GO:0006355">
    <property type="term" value="P:regulation of DNA-templated transcription"/>
    <property type="evidence" value="ECO:0007669"/>
    <property type="project" value="UniProtKB-UniRule"/>
</dbReference>
<dbReference type="GO" id="GO:0006417">
    <property type="term" value="P:regulation of translation"/>
    <property type="evidence" value="ECO:0007669"/>
    <property type="project" value="UniProtKB-UniRule"/>
</dbReference>
<dbReference type="CDD" id="cd13835">
    <property type="entry name" value="IHF_A"/>
    <property type="match status" value="1"/>
</dbReference>
<dbReference type="Gene3D" id="4.10.520.10">
    <property type="entry name" value="IHF-like DNA-binding proteins"/>
    <property type="match status" value="1"/>
</dbReference>
<dbReference type="HAMAP" id="MF_00380">
    <property type="entry name" value="IHF_alpha"/>
    <property type="match status" value="1"/>
</dbReference>
<dbReference type="InterPro" id="IPR000119">
    <property type="entry name" value="Hist_DNA-bd"/>
</dbReference>
<dbReference type="InterPro" id="IPR020816">
    <property type="entry name" value="Histone-like_DNA-bd_CS"/>
</dbReference>
<dbReference type="InterPro" id="IPR010992">
    <property type="entry name" value="IHF-like_DNA-bd_dom_sf"/>
</dbReference>
<dbReference type="InterPro" id="IPR005684">
    <property type="entry name" value="IHF_alpha"/>
</dbReference>
<dbReference type="NCBIfam" id="TIGR00987">
    <property type="entry name" value="himA"/>
    <property type="match status" value="1"/>
</dbReference>
<dbReference type="NCBIfam" id="NF001401">
    <property type="entry name" value="PRK00285.1"/>
    <property type="match status" value="1"/>
</dbReference>
<dbReference type="PANTHER" id="PTHR33175">
    <property type="entry name" value="DNA-BINDING PROTEIN HU"/>
    <property type="match status" value="1"/>
</dbReference>
<dbReference type="PANTHER" id="PTHR33175:SF2">
    <property type="entry name" value="INTEGRATION HOST FACTOR SUBUNIT ALPHA"/>
    <property type="match status" value="1"/>
</dbReference>
<dbReference type="Pfam" id="PF00216">
    <property type="entry name" value="Bac_DNA_binding"/>
    <property type="match status" value="1"/>
</dbReference>
<dbReference type="PRINTS" id="PR01727">
    <property type="entry name" value="DNABINDINGHU"/>
</dbReference>
<dbReference type="SMART" id="SM00411">
    <property type="entry name" value="BHL"/>
    <property type="match status" value="1"/>
</dbReference>
<dbReference type="SUPFAM" id="SSF47729">
    <property type="entry name" value="IHF-like DNA-binding proteins"/>
    <property type="match status" value="1"/>
</dbReference>
<dbReference type="PROSITE" id="PS00045">
    <property type="entry name" value="HISTONE_LIKE"/>
    <property type="match status" value="1"/>
</dbReference>
<comment type="function">
    <text evidence="1">This protein is one of the two subunits of integration host factor, a specific DNA-binding protein that functions in genetic recombination as well as in transcriptional and translational control.</text>
</comment>
<comment type="subunit">
    <text evidence="1">Heterodimer of an alpha and a beta chain.</text>
</comment>
<comment type="similarity">
    <text evidence="1">Belongs to the bacterial histone-like protein family.</text>
</comment>
<feature type="chain" id="PRO_1000060552" description="Integration host factor subunit alpha">
    <location>
        <begin position="1"/>
        <end position="107"/>
    </location>
</feature>
<proteinExistence type="inferred from homology"/>